<gene>
    <name type="ORF">IIV6-400R</name>
</gene>
<name>400R_IIV6</name>
<organismHost>
    <name type="scientific">Acheta domesticus</name>
    <name type="common">House cricket</name>
    <dbReference type="NCBI Taxonomy" id="6997"/>
</organismHost>
<organismHost>
    <name type="scientific">Chilo suppressalis</name>
    <name type="common">Asiatic rice borer moth</name>
    <dbReference type="NCBI Taxonomy" id="168631"/>
</organismHost>
<organismHost>
    <name type="scientific">Gryllus bimaculatus</name>
    <name type="common">Two-spotted cricket</name>
    <dbReference type="NCBI Taxonomy" id="6999"/>
</organismHost>
<organismHost>
    <name type="scientific">Gryllus campestris</name>
    <dbReference type="NCBI Taxonomy" id="58607"/>
</organismHost>
<organismHost>
    <name type="scientific">Spodoptera frugiperda</name>
    <name type="common">Fall armyworm</name>
    <dbReference type="NCBI Taxonomy" id="7108"/>
</organismHost>
<organism>
    <name type="scientific">Invertebrate iridescent virus 6</name>
    <name type="common">IIV-6</name>
    <name type="synonym">Chilo iridescent virus</name>
    <dbReference type="NCBI Taxonomy" id="176652"/>
    <lineage>
        <taxon>Viruses</taxon>
        <taxon>Varidnaviria</taxon>
        <taxon>Bamfordvirae</taxon>
        <taxon>Nucleocytoviricota</taxon>
        <taxon>Megaviricetes</taxon>
        <taxon>Pimascovirales</taxon>
        <taxon>Iridoviridae</taxon>
        <taxon>Betairidovirinae</taxon>
        <taxon>Iridovirus</taxon>
    </lineage>
</organism>
<evidence type="ECO:0000255" key="1"/>
<accession>Q91FC5</accession>
<reference key="1">
    <citation type="journal article" date="2001" name="Virology">
        <title>Analysis of the first complete DNA sequence of an invertebrate iridovirus: coding strategy of the genome of Chilo iridescent virus.</title>
        <authorList>
            <person name="Jakob N.J."/>
            <person name="Mueller K."/>
            <person name="Bahr U."/>
            <person name="Darai G."/>
        </authorList>
    </citation>
    <scope>NUCLEOTIDE SEQUENCE [LARGE SCALE GENOMIC DNA]</scope>
</reference>
<reference key="2">
    <citation type="journal article" date="2007" name="Virol. J.">
        <title>Comparative genomic analysis of the family Iridoviridae: re-annotating and defining the core set of iridovirus genes.</title>
        <authorList>
            <person name="Eaton H.E."/>
            <person name="Metcalf J."/>
            <person name="Penny E."/>
            <person name="Tcherepanov V."/>
            <person name="Upton C."/>
            <person name="Brunetti C.R."/>
        </authorList>
    </citation>
    <scope>GENOME REANNOTATION</scope>
</reference>
<protein>
    <recommendedName>
        <fullName>Uncharacterized protein 400R</fullName>
    </recommendedName>
</protein>
<keyword id="KW-0325">Glycoprotein</keyword>
<keyword id="KW-1185">Reference proteome</keyword>
<keyword id="KW-0732">Signal</keyword>
<feature type="signal peptide" evidence="1">
    <location>
        <begin position="1"/>
        <end position="16"/>
    </location>
</feature>
<feature type="chain" id="PRO_0000377882" description="Uncharacterized protein 400R">
    <location>
        <begin position="17"/>
        <end position="43"/>
    </location>
</feature>
<feature type="glycosylation site" description="N-linked (GlcNAc...) asparagine; by host" evidence="1">
    <location>
        <position position="37"/>
    </location>
</feature>
<proteinExistence type="inferred from homology"/>
<dbReference type="EMBL" id="AF303741">
    <property type="protein sequence ID" value="AAK82260.1"/>
    <property type="molecule type" value="Genomic_DNA"/>
</dbReference>
<dbReference type="RefSeq" id="NP_149863.1">
    <property type="nucleotide sequence ID" value="NC_003038.1"/>
</dbReference>
<dbReference type="KEGG" id="vg:1733030"/>
<dbReference type="Proteomes" id="UP000001359">
    <property type="component" value="Genome"/>
</dbReference>
<sequence length="43" mass="5013">MKLLNFILIIFNALKSRHLIRCLDSKCHKLFPLLEVNKSTTSL</sequence>